<sequence length="167" mass="19052">MATSELSCEVSEENCERREAFWAEWKDLTLSTRPEEGCSLHEEDTQRHETYHQQGQCQVLVQRSPWLMMRMGILGRGLQEYQLPYQRVLPLPIFTPAKMGATKEEREDTPIQLQELLALETALGGQCVDRQEVAEITKQLPPVVPVSKPGALRRSLSRSMSQEAQRG</sequence>
<dbReference type="EMBL" id="AJ000491">
    <property type="protein sequence ID" value="CAA04129.1"/>
    <property type="molecule type" value="mRNA"/>
</dbReference>
<dbReference type="EMBL" id="AJ010063">
    <property type="protein sequence ID" value="CAA08987.1"/>
    <property type="molecule type" value="Genomic_DNA"/>
</dbReference>
<dbReference type="EMBL" id="AJ011098">
    <property type="protein sequence ID" value="CAA09479.1"/>
    <property type="molecule type" value="Genomic_DNA"/>
</dbReference>
<dbReference type="EMBL" id="BC012628">
    <property type="protein sequence ID" value="AAH12628.1"/>
    <property type="molecule type" value="mRNA"/>
</dbReference>
<dbReference type="EMBL" id="BC013330">
    <property type="protein sequence ID" value="AAH13330.1"/>
    <property type="molecule type" value="mRNA"/>
</dbReference>
<dbReference type="CCDS" id="CCDS11342.1"/>
<dbReference type="RefSeq" id="NP_003664.1">
    <property type="nucleotide sequence ID" value="NM_003673.4"/>
</dbReference>
<dbReference type="PDB" id="1YA5">
    <property type="method" value="X-ray"/>
    <property type="resolution" value="2.44 A"/>
    <property type="chains" value="T=1-90"/>
</dbReference>
<dbReference type="PDB" id="2F8V">
    <property type="method" value="X-ray"/>
    <property type="resolution" value="2.75 A"/>
    <property type="chains" value="T/Y=1-167"/>
</dbReference>
<dbReference type="PDBsum" id="1YA5"/>
<dbReference type="PDBsum" id="2F8V"/>
<dbReference type="SMR" id="O15273"/>
<dbReference type="BioGRID" id="114127">
    <property type="interactions" value="51"/>
</dbReference>
<dbReference type="ComplexPortal" id="CPX-101">
    <property type="entry name" value="Titin-Telethonin complex"/>
</dbReference>
<dbReference type="CORUM" id="O15273"/>
<dbReference type="DIP" id="DIP-35730N"/>
<dbReference type="FunCoup" id="O15273">
    <property type="interactions" value="29"/>
</dbReference>
<dbReference type="IntAct" id="O15273">
    <property type="interactions" value="68"/>
</dbReference>
<dbReference type="MINT" id="O15273"/>
<dbReference type="STRING" id="9606.ENSP00000312624"/>
<dbReference type="iPTMnet" id="O15273"/>
<dbReference type="PhosphoSitePlus" id="O15273"/>
<dbReference type="BioMuta" id="TCAP"/>
<dbReference type="MassIVE" id="O15273"/>
<dbReference type="PaxDb" id="9606-ENSP00000312624"/>
<dbReference type="PeptideAtlas" id="O15273"/>
<dbReference type="ProteomicsDB" id="48560"/>
<dbReference type="Antibodypedia" id="3888">
    <property type="antibodies" value="232 antibodies from 29 providers"/>
</dbReference>
<dbReference type="DNASU" id="8557"/>
<dbReference type="Ensembl" id="ENST00000309889.3">
    <property type="protein sequence ID" value="ENSP00000312624.2"/>
    <property type="gene ID" value="ENSG00000173991.6"/>
</dbReference>
<dbReference type="GeneID" id="8557"/>
<dbReference type="KEGG" id="hsa:8557"/>
<dbReference type="MANE-Select" id="ENST00000309889.3">
    <property type="protein sequence ID" value="ENSP00000312624.2"/>
    <property type="RefSeq nucleotide sequence ID" value="NM_003673.4"/>
    <property type="RefSeq protein sequence ID" value="NP_003664.1"/>
</dbReference>
<dbReference type="UCSC" id="uc002hsh.4">
    <property type="organism name" value="human"/>
</dbReference>
<dbReference type="AGR" id="HGNC:11610"/>
<dbReference type="CTD" id="8557"/>
<dbReference type="DisGeNET" id="8557"/>
<dbReference type="GeneCards" id="TCAP"/>
<dbReference type="GeneReviews" id="TCAP"/>
<dbReference type="HGNC" id="HGNC:11610">
    <property type="gene designation" value="TCAP"/>
</dbReference>
<dbReference type="HPA" id="ENSG00000173991">
    <property type="expression patterns" value="Group enriched (heart muscle, skeletal muscle, tongue)"/>
</dbReference>
<dbReference type="MalaCards" id="TCAP"/>
<dbReference type="MIM" id="601954">
    <property type="type" value="phenotype"/>
</dbReference>
<dbReference type="MIM" id="604488">
    <property type="type" value="gene"/>
</dbReference>
<dbReference type="MIM" id="607487">
    <property type="type" value="phenotype"/>
</dbReference>
<dbReference type="neXtProt" id="NX_O15273"/>
<dbReference type="OpenTargets" id="ENSG00000173991"/>
<dbReference type="Orphanet" id="154">
    <property type="disease" value="Familial isolated dilated cardiomyopathy"/>
</dbReference>
<dbReference type="Orphanet" id="34514">
    <property type="disease" value="Telethonin-related limb-girdle muscular dystrophy R7"/>
</dbReference>
<dbReference type="PharmGKB" id="PA36370"/>
<dbReference type="VEuPathDB" id="HostDB:ENSG00000173991"/>
<dbReference type="eggNOG" id="ENOG502S21D">
    <property type="taxonomic scope" value="Eukaryota"/>
</dbReference>
<dbReference type="GeneTree" id="ENSGT00390000012014"/>
<dbReference type="InParanoid" id="O15273"/>
<dbReference type="OMA" id="QCQAVVQ"/>
<dbReference type="OrthoDB" id="8532967at2759"/>
<dbReference type="PAN-GO" id="O15273">
    <property type="GO annotations" value="13 GO annotations based on evolutionary models"/>
</dbReference>
<dbReference type="PhylomeDB" id="O15273"/>
<dbReference type="TreeFam" id="TF333228"/>
<dbReference type="PathwayCommons" id="O15273"/>
<dbReference type="Reactome" id="R-HSA-390522">
    <property type="pathway name" value="Striated Muscle Contraction"/>
</dbReference>
<dbReference type="SignaLink" id="O15273"/>
<dbReference type="SIGNOR" id="O15273"/>
<dbReference type="BioGRID-ORCS" id="8557">
    <property type="hits" value="16 hits in 1149 CRISPR screens"/>
</dbReference>
<dbReference type="ChiTaRS" id="TCAP">
    <property type="organism name" value="human"/>
</dbReference>
<dbReference type="EvolutionaryTrace" id="O15273"/>
<dbReference type="GeneWiki" id="Telethonin"/>
<dbReference type="GenomeRNAi" id="8557"/>
<dbReference type="Pharos" id="O15273">
    <property type="development level" value="Tbio"/>
</dbReference>
<dbReference type="PRO" id="PR:O15273"/>
<dbReference type="Proteomes" id="UP000005640">
    <property type="component" value="Chromosome 17"/>
</dbReference>
<dbReference type="RNAct" id="O15273">
    <property type="molecule type" value="protein"/>
</dbReference>
<dbReference type="Bgee" id="ENSG00000173991">
    <property type="expression patterns" value="Expressed in apex of heart and 148 other cell types or tissues"/>
</dbReference>
<dbReference type="ExpressionAtlas" id="O15273">
    <property type="expression patterns" value="baseline and differential"/>
</dbReference>
<dbReference type="GO" id="GO:0005829">
    <property type="term" value="C:cytosol"/>
    <property type="evidence" value="ECO:0000304"/>
    <property type="project" value="Reactome"/>
</dbReference>
<dbReference type="GO" id="GO:0031674">
    <property type="term" value="C:I band"/>
    <property type="evidence" value="ECO:0000250"/>
    <property type="project" value="BHF-UCL"/>
</dbReference>
<dbReference type="GO" id="GO:1990733">
    <property type="term" value="C:titin-telethonin complex"/>
    <property type="evidence" value="ECO:0000353"/>
    <property type="project" value="ComplexPortal"/>
</dbReference>
<dbReference type="GO" id="GO:0030018">
    <property type="term" value="C:Z disc"/>
    <property type="evidence" value="ECO:0000314"/>
    <property type="project" value="BHF-UCL"/>
</dbReference>
<dbReference type="GO" id="GO:0036122">
    <property type="term" value="F:BMP binding"/>
    <property type="evidence" value="ECO:0000353"/>
    <property type="project" value="BHF-UCL"/>
</dbReference>
<dbReference type="GO" id="GO:0051373">
    <property type="term" value="F:FATZ binding"/>
    <property type="evidence" value="ECO:0000353"/>
    <property type="project" value="BHF-UCL"/>
</dbReference>
<dbReference type="GO" id="GO:0060090">
    <property type="term" value="F:molecular adaptor activity"/>
    <property type="evidence" value="ECO:0000269"/>
    <property type="project" value="DisProt"/>
</dbReference>
<dbReference type="GO" id="GO:0030674">
    <property type="term" value="F:protein-macromolecule adaptor activity"/>
    <property type="evidence" value="ECO:0000314"/>
    <property type="project" value="BHF-UCL"/>
</dbReference>
<dbReference type="GO" id="GO:0008307">
    <property type="term" value="F:structural constituent of muscle"/>
    <property type="evidence" value="ECO:0000315"/>
    <property type="project" value="BHF-UCL"/>
</dbReference>
<dbReference type="GO" id="GO:0031432">
    <property type="term" value="F:titin binding"/>
    <property type="evidence" value="ECO:0000353"/>
    <property type="project" value="BHF-UCL"/>
</dbReference>
<dbReference type="GO" id="GO:0070080">
    <property type="term" value="F:titin Z domain binding"/>
    <property type="evidence" value="ECO:0000353"/>
    <property type="project" value="BHF-UCL"/>
</dbReference>
<dbReference type="GO" id="GO:0044325">
    <property type="term" value="F:transmembrane transporter binding"/>
    <property type="evidence" value="ECO:0000353"/>
    <property type="project" value="BHF-UCL"/>
</dbReference>
<dbReference type="GO" id="GO:0007512">
    <property type="term" value="P:adult heart development"/>
    <property type="evidence" value="ECO:0000315"/>
    <property type="project" value="BHF-UCL"/>
</dbReference>
<dbReference type="GO" id="GO:0055013">
    <property type="term" value="P:cardiac muscle cell development"/>
    <property type="evidence" value="ECO:0000315"/>
    <property type="project" value="BHF-UCL"/>
</dbReference>
<dbReference type="GO" id="GO:0060048">
    <property type="term" value="P:cardiac muscle contraction"/>
    <property type="evidence" value="ECO:0000315"/>
    <property type="project" value="BHF-UCL"/>
</dbReference>
<dbReference type="GO" id="GO:0003300">
    <property type="term" value="P:cardiac muscle hypertrophy"/>
    <property type="evidence" value="ECO:0000315"/>
    <property type="project" value="BHF-UCL"/>
</dbReference>
<dbReference type="GO" id="GO:0014898">
    <property type="term" value="P:cardiac muscle hypertrophy in response to stress"/>
    <property type="evidence" value="ECO:0000315"/>
    <property type="project" value="BHF-UCL"/>
</dbReference>
<dbReference type="GO" id="GO:0055008">
    <property type="term" value="P:cardiac muscle tissue morphogenesis"/>
    <property type="evidence" value="ECO:0000315"/>
    <property type="project" value="BHF-UCL"/>
</dbReference>
<dbReference type="GO" id="GO:0055003">
    <property type="term" value="P:cardiac myofibril assembly"/>
    <property type="evidence" value="ECO:0000315"/>
    <property type="project" value="BHF-UCL"/>
</dbReference>
<dbReference type="GO" id="GO:0050982">
    <property type="term" value="P:detection of mechanical stimulus"/>
    <property type="evidence" value="ECO:0000304"/>
    <property type="project" value="BHF-UCL"/>
</dbReference>
<dbReference type="GO" id="GO:0035995">
    <property type="term" value="P:detection of muscle stretch"/>
    <property type="evidence" value="ECO:0000315"/>
    <property type="project" value="BHF-UCL"/>
</dbReference>
<dbReference type="GO" id="GO:0030049">
    <property type="term" value="P:muscle filament sliding"/>
    <property type="evidence" value="ECO:0000303"/>
    <property type="project" value="ComplexPortal"/>
</dbReference>
<dbReference type="GO" id="GO:0030916">
    <property type="term" value="P:otic vesicle formation"/>
    <property type="evidence" value="ECO:0007669"/>
    <property type="project" value="Ensembl"/>
</dbReference>
<dbReference type="GO" id="GO:0065003">
    <property type="term" value="P:protein-containing complex assembly"/>
    <property type="evidence" value="ECO:0000304"/>
    <property type="project" value="ProtInc"/>
</dbReference>
<dbReference type="GO" id="GO:0035994">
    <property type="term" value="P:response to muscle stretch"/>
    <property type="evidence" value="ECO:0000304"/>
    <property type="project" value="BHF-UCL"/>
</dbReference>
<dbReference type="GO" id="GO:0045214">
    <property type="term" value="P:sarcomere organization"/>
    <property type="evidence" value="ECO:0000315"/>
    <property type="project" value="BHF-UCL"/>
</dbReference>
<dbReference type="GO" id="GO:0048769">
    <property type="term" value="P:sarcomerogenesis"/>
    <property type="evidence" value="ECO:0000315"/>
    <property type="project" value="BHF-UCL"/>
</dbReference>
<dbReference type="GO" id="GO:0003009">
    <property type="term" value="P:skeletal muscle contraction"/>
    <property type="evidence" value="ECO:0000270"/>
    <property type="project" value="BHF-UCL"/>
</dbReference>
<dbReference type="GO" id="GO:0030241">
    <property type="term" value="P:skeletal muscle myosin thick filament assembly"/>
    <property type="evidence" value="ECO:0000315"/>
    <property type="project" value="BHF-UCL"/>
</dbReference>
<dbReference type="GO" id="GO:0030240">
    <property type="term" value="P:skeletal muscle thin filament assembly"/>
    <property type="evidence" value="ECO:0000315"/>
    <property type="project" value="BHF-UCL"/>
</dbReference>
<dbReference type="GO" id="GO:0001756">
    <property type="term" value="P:somitogenesis"/>
    <property type="evidence" value="ECO:0007669"/>
    <property type="project" value="Ensembl"/>
</dbReference>
<dbReference type="DisProt" id="DP00797"/>
<dbReference type="FunFam" id="2.20.160.10:FF:000001">
    <property type="entry name" value="Titin-cap (Telethonin)"/>
    <property type="match status" value="1"/>
</dbReference>
<dbReference type="Gene3D" id="2.20.160.10">
    <property type="entry name" value="titin domain like"/>
    <property type="match status" value="1"/>
</dbReference>
<dbReference type="InterPro" id="IPR015667">
    <property type="entry name" value="Telethonin"/>
</dbReference>
<dbReference type="InterPro" id="IPR023111">
    <property type="entry name" value="Titin-like_dom_sf"/>
</dbReference>
<dbReference type="PANTHER" id="PTHR15143">
    <property type="entry name" value="TELETHONIN"/>
    <property type="match status" value="1"/>
</dbReference>
<dbReference type="PANTHER" id="PTHR15143:SF0">
    <property type="entry name" value="TELETHONIN"/>
    <property type="match status" value="1"/>
</dbReference>
<dbReference type="Pfam" id="PF09470">
    <property type="entry name" value="Telethonin"/>
    <property type="match status" value="1"/>
</dbReference>
<feature type="chain" id="PRO_0000072483" description="Telethonin">
    <location>
        <begin position="1"/>
        <end position="167"/>
    </location>
</feature>
<feature type="region of interest" description="Disordered" evidence="2">
    <location>
        <begin position="144"/>
        <end position="167"/>
    </location>
</feature>
<feature type="compositionally biased region" description="Polar residues" evidence="2">
    <location>
        <begin position="157"/>
        <end position="167"/>
    </location>
</feature>
<feature type="modified residue" description="Phosphoserine" evidence="1">
    <location>
        <position position="39"/>
    </location>
</feature>
<feature type="sequence variant" id="VAR_026649" description="In dbSNP:rs397516862." evidence="10 12 13">
    <location>
        <position position="13"/>
    </location>
</feature>
<feature type="sequence variant" id="VAR_026650" description="In CMH25; dbSNP:rs775636212." evidence="10">
    <original>R</original>
    <variation>W</variation>
    <location>
        <position position="70"/>
    </location>
</feature>
<feature type="sequence variant" id="VAR_029445" description="In dbSNP:rs17851031." evidence="8">
    <original>L</original>
    <variation>H</variation>
    <location>
        <position position="74"/>
    </location>
</feature>
<feature type="sequence variant" id="VAR_015397" description="Found in a patient with dilated cardiomyopathy; uncertain significance; dbSNP:rs121434298." evidence="6">
    <original>R</original>
    <variation>Q</variation>
    <location>
        <position position="87"/>
    </location>
</feature>
<feature type="sequence variant" id="VAR_026651" description="In CMH25; uncertain significance; dbSNP:rs727504427." evidence="10">
    <original>P</original>
    <variation>L</variation>
    <location>
        <position position="90"/>
    </location>
</feature>
<feature type="sequence variant" id="VAR_051421" description="In dbSNP:rs45578741.">
    <original>R</original>
    <variation>C</variation>
    <location>
        <position position="106"/>
    </location>
</feature>
<feature type="sequence variant" id="VAR_029446" description="Found in a patient with dilated cardiomyopathy; likely pathogenic; impairs the interaction with CSRP3, TTN and MYOZ2; dbSNP:rs748358368." evidence="9">
    <original>E</original>
    <variation>Q</variation>
    <location>
        <position position="132"/>
    </location>
</feature>
<feature type="sequence variant" id="VAR_029447" description="In CMH25; increased interaction with TTN and MYOZ2; dbSNP:rs773317399." evidence="9">
    <original>T</original>
    <variation>I</variation>
    <location>
        <position position="137"/>
    </location>
</feature>
<feature type="sequence variant" id="VAR_029448" description="In CMH25; dbSNP:rs149585781." evidence="9">
    <original>R</original>
    <variation>H</variation>
    <location>
        <position position="153"/>
    </location>
</feature>
<feature type="strand" evidence="16">
    <location>
        <begin position="4"/>
        <end position="14"/>
    </location>
</feature>
<feature type="turn" evidence="16">
    <location>
        <begin position="15"/>
        <end position="18"/>
    </location>
</feature>
<feature type="strand" evidence="16">
    <location>
        <begin position="19"/>
        <end position="33"/>
    </location>
</feature>
<feature type="helix" evidence="16">
    <location>
        <begin position="35"/>
        <end position="37"/>
    </location>
</feature>
<feature type="strand" evidence="16">
    <location>
        <begin position="38"/>
        <end position="44"/>
    </location>
</feature>
<feature type="turn" evidence="16">
    <location>
        <begin position="45"/>
        <end position="48"/>
    </location>
</feature>
<feature type="strand" evidence="16">
    <location>
        <begin position="49"/>
        <end position="55"/>
    </location>
</feature>
<feature type="strand" evidence="16">
    <location>
        <begin position="57"/>
        <end position="62"/>
    </location>
</feature>
<feature type="strand" evidence="16">
    <location>
        <begin position="67"/>
        <end position="73"/>
    </location>
</feature>
<feature type="strand" evidence="16">
    <location>
        <begin position="78"/>
        <end position="84"/>
    </location>
</feature>
<reference key="1">
    <citation type="journal article" date="1997" name="FEBS Lett.">
        <title>Telethonin, a novel sarcomeric protein of heart and skeletal muscle.</title>
        <authorList>
            <person name="Valle G."/>
            <person name="Faulkner G."/>
            <person name="de Antoni A."/>
            <person name="Pacchioni B."/>
            <person name="Pallavicini A."/>
            <person name="Pandolfo D."/>
            <person name="Tiso N."/>
            <person name="Toppo S."/>
            <person name="Trevisan S."/>
            <person name="Lanfranchi G."/>
        </authorList>
    </citation>
    <scope>NUCLEOTIDE SEQUENCE [MRNA]</scope>
    <source>
        <tissue>Skeletal muscle</tissue>
    </source>
</reference>
<reference key="2">
    <citation type="submission" date="1998-08" db="EMBL/GenBank/DDBJ databases">
        <title>Human telethonin genomic sequence.</title>
        <authorList>
            <person name="Pallavicini A."/>
            <person name="Valle G."/>
            <person name="Lanfranchi G."/>
        </authorList>
    </citation>
    <scope>NUCLEOTIDE SEQUENCE [GENOMIC DNA]</scope>
</reference>
<reference key="3">
    <citation type="submission" date="1998-09" db="EMBL/GenBank/DDBJ databases">
        <title>Structure of the human telethonin gene.</title>
        <authorList>
            <person name="Mues A."/>
            <person name="Gautel M."/>
        </authorList>
    </citation>
    <scope>NUCLEOTIDE SEQUENCE [GENOMIC DNA]</scope>
</reference>
<reference key="4">
    <citation type="journal article" date="2004" name="Genome Res.">
        <title>The status, quality, and expansion of the NIH full-length cDNA project: the Mammalian Gene Collection (MGC).</title>
        <authorList>
            <consortium name="The MGC Project Team"/>
        </authorList>
    </citation>
    <scope>NUCLEOTIDE SEQUENCE [LARGE SCALE MRNA]</scope>
    <scope>VARIANT HIS-74</scope>
    <source>
        <tissue>Prostate</tissue>
    </source>
</reference>
<reference key="5">
    <citation type="journal article" date="1998" name="FEBS Lett.">
        <title>Two immunoglobulin-like domains of the Z-disc portion of titin interact in a conformation-dependent way with telethonin.</title>
        <authorList>
            <person name="Mues A."/>
            <person name="van der Ven P.F.M."/>
            <person name="Young P."/>
            <person name="Furst D.O."/>
            <person name="Gautel M."/>
        </authorList>
    </citation>
    <scope>INTERACTION WITH TTN</scope>
</reference>
<reference key="6">
    <citation type="journal article" date="2000" name="J. Biol. Chem.">
        <title>FATZ, a filamin-, actinin-, and telethonin-binding protein of the Z-disc of skeletal muscle.</title>
        <authorList>
            <person name="Faulkner G."/>
            <person name="Pallavicini A."/>
            <person name="Comelli A."/>
            <person name="Salamon M."/>
            <person name="Bortoletto G."/>
            <person name="Ievolella C."/>
            <person name="Trevisan S."/>
            <person name="Kojic' S."/>
            <person name="Dalla Vecchia F."/>
            <person name="Laveder P."/>
            <person name="Valle G."/>
            <person name="Lanfranchi G."/>
        </authorList>
    </citation>
    <scope>INTERACTION WITH MYOZ1</scope>
</reference>
<reference key="7">
    <citation type="journal article" date="2002" name="J. Biol. Chem.">
        <title>Calsarcin-3, a novel skeletal muscle-specific member of the calsarcin family, interacts with multiple Z-disc proteins.</title>
        <authorList>
            <person name="Frey N."/>
            <person name="Olson E.N."/>
        </authorList>
    </citation>
    <scope>INTERACTION WITH MYOZ3</scope>
</reference>
<reference key="8">
    <citation type="journal article" date="2004" name="J. Mol. Biol.">
        <title>The Ankrd2 protein, a link between the sarcomere and the nucleus in skeletal muscle.</title>
        <authorList>
            <person name="Kojic S."/>
            <person name="Medeot E."/>
            <person name="Guccione E."/>
            <person name="Krmac H."/>
            <person name="Zara I."/>
            <person name="Martinelli V."/>
            <person name="Valle G."/>
            <person name="Faulkner G."/>
        </authorList>
    </citation>
    <scope>INTERACTION WITH ANKRD2</scope>
</reference>
<reference key="9">
    <citation type="journal article" date="2014" name="FEBS J.">
        <title>Muscle lim protein isoform negatively regulates striated muscle actin dynamics and differentiation.</title>
        <authorList>
            <person name="Vafiadaki E."/>
            <person name="Arvanitis D.A."/>
            <person name="Papalouka V."/>
            <person name="Terzis G."/>
            <person name="Roumeliotis T.I."/>
            <person name="Spengos K."/>
            <person name="Garbis S.D."/>
            <person name="Manta P."/>
            <person name="Kranias E.G."/>
            <person name="Sanoudou D."/>
        </authorList>
    </citation>
    <scope>INTERACTION WITH CSRP3</scope>
</reference>
<reference key="10">
    <citation type="journal article" date="2006" name="Nature">
        <title>Palindromic assembly of the giant muscle protein titin in the sarcomeric Z-disk.</title>
        <authorList>
            <person name="Zou P."/>
            <person name="Pinotsis N."/>
            <person name="Lange S."/>
            <person name="Song Y.-H."/>
            <person name="Popov A."/>
            <person name="Mavridis I."/>
            <person name="Mayans O.M."/>
            <person name="Gautel M."/>
            <person name="Wilmanns M."/>
        </authorList>
    </citation>
    <scope>X-RAY CRYSTALLOGRAPHY (2.44 ANGSTROMS) OF 1-90 IN COMPLEX WITH TTN</scope>
</reference>
<reference key="11">
    <citation type="journal article" date="2006" name="J. Struct. Biol.">
        <title>Evidence for a dimeric assembly of two titin/telethonin complexes induced by the telethonin C-terminus.</title>
        <authorList>
            <person name="Pinotsis N."/>
            <person name="Petoukhov M."/>
            <person name="Lange S."/>
            <person name="Svergun D."/>
            <person name="Zou P."/>
            <person name="Gautel M."/>
            <person name="Wilmanns M."/>
        </authorList>
    </citation>
    <scope>X-RAY CRYSTALLOGRAPHY (2.75 ANGSTROMS) IN COMPLEX WITH TTN</scope>
    <scope>SUBCELLULAR LOCATION</scope>
</reference>
<reference key="12">
    <citation type="journal article" date="2000" name="Nat. Genet.">
        <title>Limb-girdle muscular dystrophy type 2G is caused by mutations in the gene encoding the sarcomeric protein telethonin.</title>
        <authorList>
            <person name="Moreira E.S."/>
            <person name="Wiltshire T.J."/>
            <person name="Faulkner G."/>
            <person name="Nilforoushan A."/>
            <person name="Vainzof M."/>
            <person name="Suzuki O.T."/>
            <person name="Valle G."/>
            <person name="Reeves R."/>
            <person name="Zatz M."/>
            <person name="Passos-Bueno M.R."/>
            <person name="Jenne D.E."/>
        </authorList>
    </citation>
    <scope>INVOLVEMENT IN LGMDR7</scope>
</reference>
<reference key="13">
    <citation type="journal article" date="2002" name="Cell">
        <title>The cardiac mechanical stretch sensor machinery involves a Z disc complex that is defective in a subset of human dilated cardiomyopathy.</title>
        <authorList>
            <person name="Knoell R."/>
            <person name="Hoshijima M."/>
            <person name="Hoffman H.M."/>
            <person name="Person V."/>
            <person name="Lorenzen-Schmidt I."/>
            <person name="Bang M.-L."/>
            <person name="Hayashi T."/>
            <person name="Shiga N."/>
            <person name="Yasukawa H."/>
            <person name="Schaper W."/>
            <person name="McKenna W."/>
            <person name="Yokoyama M."/>
            <person name="Schork N.J."/>
            <person name="Omens J.H."/>
            <person name="McCulloch A.D."/>
            <person name="Kimura A."/>
            <person name="Gregorio C.C."/>
            <person name="Poller W."/>
            <person name="Schaper J."/>
            <person name="Schultheiss H.P."/>
            <person name="Chien K.R."/>
        </authorList>
    </citation>
    <scope>VARIANT GLN-87</scope>
</reference>
<reference key="14">
    <citation type="journal article" date="2006" name="Mol. Genet. Metab.">
        <title>Genotype-phenotype relationships involving hypertrophic cardiomyopathy-associated mutations in titin, muscle LIM protein, and telethonin.</title>
        <authorList>
            <person name="Bos J.M."/>
            <person name="Poley R.N."/>
            <person name="Ny M."/>
            <person name="Tester D.J."/>
            <person name="Xu X."/>
            <person name="Vatta M."/>
            <person name="Towbin J.A."/>
            <person name="Gersh B.J."/>
            <person name="Ommen S.R."/>
            <person name="Ackerman M.J."/>
        </authorList>
    </citation>
    <scope>VARIANTS CMH25 TRP-70 AND LEU-90</scope>
    <scope>VARIANT GLU-13 DEL</scope>
</reference>
<reference key="15">
    <citation type="journal article" date="2006" name="Mol. Genet. Metab.">
        <title>Deletion of Glu at codon 13 in the TCAP gene encoding the Z-disc protein titin-cap/telethonin is a rare non-synonymous polymorphism.</title>
        <authorList>
            <person name="Perrot A."/>
            <person name="Posch M.G."/>
            <person name="Osterziel K.J."/>
        </authorList>
    </citation>
    <scope>VARIANT GLU-13 DEL</scope>
</reference>
<reference key="16">
    <citation type="journal article" date="2006" name="Mol. Genet. Metab.">
        <title>Deletion of Glu at codon 13 of the TCAP gene encoding the titin-cap-telethonin is a rare polymorphism in a large Italian population.</title>
        <authorList>
            <person name="Marziliano N."/>
            <person name="Pilotto A."/>
            <person name="Grasso M."/>
            <person name="Pasotti M."/>
            <person name="Arbustini E."/>
        </authorList>
    </citation>
    <scope>VARIANT GLU-13 DEL</scope>
</reference>
<reference key="17">
    <citation type="journal article" date="2004" name="J. Am. Coll. Cardiol.">
        <title>Tcap gene mutations in hypertrophic cardiomyopathy and dilated cardiomyopathy.</title>
        <authorList>
            <person name="Hayashi T."/>
            <person name="Arimura T."/>
            <person name="Itoh-Satoh M."/>
            <person name="Ueda K."/>
            <person name="Hohda S."/>
            <person name="Inagaki N."/>
            <person name="Takahashi M."/>
            <person name="Hori H."/>
            <person name="Yasunami M."/>
            <person name="Nishi H."/>
            <person name="Koga Y."/>
            <person name="Nakamura H."/>
            <person name="Matsuzaki M."/>
            <person name="Choi B.Y."/>
            <person name="Bae S.W."/>
            <person name="You C.W."/>
            <person name="Han K.H."/>
            <person name="Park J.E."/>
            <person name="Knoell R."/>
            <person name="Hoshijima M."/>
            <person name="Chien K.R."/>
            <person name="Kimura A."/>
        </authorList>
    </citation>
    <scope>VARIANTS CMH25 ILE-137 AND HIS-153</scope>
    <scope>VARIANT GLN-132</scope>
    <scope>CHARACTERIZATION OF VARIANTS CMH25 ILE-137 AND HIS-153</scope>
    <scope>CHARACTERIZATION OF VARIANT GLN-132</scope>
    <scope>INTERACTION WITH CSRP3; MYOZ2 AND TTN</scope>
</reference>
<evidence type="ECO:0000250" key="1">
    <source>
        <dbReference type="UniProtKB" id="O70548"/>
    </source>
</evidence>
<evidence type="ECO:0000256" key="2">
    <source>
        <dbReference type="SAM" id="MobiDB-lite"/>
    </source>
</evidence>
<evidence type="ECO:0000269" key="3">
    <source>
    </source>
</evidence>
<evidence type="ECO:0000269" key="4">
    <source>
    </source>
</evidence>
<evidence type="ECO:0000269" key="5">
    <source>
    </source>
</evidence>
<evidence type="ECO:0000269" key="6">
    <source>
    </source>
</evidence>
<evidence type="ECO:0000269" key="7">
    <source>
    </source>
</evidence>
<evidence type="ECO:0000269" key="8">
    <source>
    </source>
</evidence>
<evidence type="ECO:0000269" key="9">
    <source>
    </source>
</evidence>
<evidence type="ECO:0000269" key="10">
    <source>
    </source>
</evidence>
<evidence type="ECO:0000269" key="11">
    <source>
    </source>
</evidence>
<evidence type="ECO:0000269" key="12">
    <source>
    </source>
</evidence>
<evidence type="ECO:0000269" key="13">
    <source>
    </source>
</evidence>
<evidence type="ECO:0000269" key="14">
    <source>
    </source>
</evidence>
<evidence type="ECO:0000269" key="15">
    <source>
    </source>
</evidence>
<evidence type="ECO:0007829" key="16">
    <source>
        <dbReference type="PDB" id="1YA5"/>
    </source>
</evidence>
<comment type="function">
    <text>Muscle assembly regulating factor. Mediates the antiparallel assembly of titin (TTN) molecules at the sarcomeric Z-disk.</text>
</comment>
<comment type="subunit">
    <text evidence="4 5 7 9 11 14 15">Interacts with MYOZ1, MYOZ2 and MYOZ3. Interacts with CSRP3. Interacts directly with the N-terminal Ig-like domains of 2 titin (TTN) molecules. Interacts with ANKRD2; the interaction is direct.</text>
</comment>
<comment type="interaction">
    <interactant intactId="EBI-954089">
        <id>O15273</id>
    </interactant>
    <interactant intactId="EBI-11976299">
        <id>Q5BKX5-3</id>
        <label>ACTMAP</label>
    </interactant>
    <organismsDiffer>false</organismsDiffer>
    <experiments>3</experiments>
</comment>
<comment type="interaction">
    <interactant intactId="EBI-954089">
        <id>O15273</id>
    </interactant>
    <interactant intactId="EBI-6425205">
        <id>Q9NWX5</id>
        <label>ASB6</label>
    </interactant>
    <organismsDiffer>false</organismsDiffer>
    <experiments>3</experiments>
</comment>
<comment type="interaction">
    <interactant intactId="EBI-954089">
        <id>O15273</id>
    </interactant>
    <interactant intactId="EBI-11954292">
        <id>Q86V38</id>
        <label>ATN1</label>
    </interactant>
    <organismsDiffer>false</organismsDiffer>
    <experiments>3</experiments>
</comment>
<comment type="interaction">
    <interactant intactId="EBI-954089">
        <id>O15273</id>
    </interactant>
    <interactant intactId="EBI-930964">
        <id>P54253</id>
        <label>ATXN1</label>
    </interactant>
    <organismsDiffer>false</organismsDiffer>
    <experiments>8</experiments>
</comment>
<comment type="interaction">
    <interactant intactId="EBI-954089">
        <id>O15273</id>
    </interactant>
    <interactant intactId="EBI-2548012">
        <id>Q9H2G9</id>
        <label>BLZF1</label>
    </interactant>
    <organismsDiffer>false</organismsDiffer>
    <experiments>3</experiments>
</comment>
<comment type="interaction">
    <interactant intactId="EBI-954089">
        <id>O15273</id>
    </interactant>
    <interactant intactId="EBI-718729">
        <id>P55212</id>
        <label>CASP6</label>
    </interactant>
    <organismsDiffer>false</organismsDiffer>
    <experiments>3</experiments>
</comment>
<comment type="interaction">
    <interactant intactId="EBI-954089">
        <id>O15273</id>
    </interactant>
    <interactant intactId="EBI-78219">
        <id>P45973</id>
        <label>CBX5</label>
    </interactant>
    <organismsDiffer>false</organismsDiffer>
    <experiments>6</experiments>
</comment>
<comment type="interaction">
    <interactant intactId="EBI-954089">
        <id>O15273</id>
    </interactant>
    <interactant intactId="EBI-1773949">
        <id>Q9BXL8</id>
        <label>CDCA4</label>
    </interactant>
    <organismsDiffer>false</organismsDiffer>
    <experiments>3</experiments>
</comment>
<comment type="interaction">
    <interactant intactId="EBI-954089">
        <id>O15273</id>
    </interactant>
    <interactant intactId="EBI-712959">
        <id>O15182</id>
        <label>CETN3</label>
    </interactant>
    <organismsDiffer>false</organismsDiffer>
    <experiments>2</experiments>
</comment>
<comment type="interaction">
    <interactant intactId="EBI-954089">
        <id>O15273</id>
    </interactant>
    <interactant intactId="EBI-25837549">
        <id>P28329-3</id>
        <label>CHAT</label>
    </interactant>
    <organismsDiffer>false</organismsDiffer>
    <experiments>3</experiments>
</comment>
<comment type="interaction">
    <interactant intactId="EBI-954089">
        <id>O15273</id>
    </interactant>
    <interactant intactId="EBI-6875961">
        <id>P02489</id>
        <label>CRYAA</label>
    </interactant>
    <organismsDiffer>false</organismsDiffer>
    <experiments>3</experiments>
</comment>
<comment type="interaction">
    <interactant intactId="EBI-954089">
        <id>O15273</id>
    </interactant>
    <interactant intactId="EBI-5658719">
        <id>P50461</id>
        <label>CSRP3</label>
    </interactant>
    <organismsDiffer>false</organismsDiffer>
    <experiments>3</experiments>
</comment>
<comment type="interaction">
    <interactant intactId="EBI-954089">
        <id>O15273</id>
    </interactant>
    <interactant intactId="EBI-12593112">
        <id>O75190-2</id>
        <label>DNAJB6</label>
    </interactant>
    <organismsDiffer>false</organismsDiffer>
    <experiments>3</experiments>
</comment>
<comment type="interaction">
    <interactant intactId="EBI-954089">
        <id>O15273</id>
    </interactant>
    <interactant intactId="EBI-356015">
        <id>Q14204</id>
        <label>DYNC1H1</label>
    </interactant>
    <organismsDiffer>false</organismsDiffer>
    <experiments>3</experiments>
</comment>
<comment type="interaction">
    <interactant intactId="EBI-954089">
        <id>O15273</id>
    </interactant>
    <interactant intactId="EBI-2565863">
        <id>P00488</id>
        <label>F13A1</label>
    </interactant>
    <organismsDiffer>false</organismsDiffer>
    <experiments>3</experiments>
</comment>
<comment type="interaction">
    <interactant intactId="EBI-954089">
        <id>O15273</id>
    </interactant>
    <interactant intactId="EBI-12940382">
        <id>P0C7A2-2</id>
        <label>FAM153B</label>
    </interactant>
    <organismsDiffer>false</organismsDiffer>
    <experiments>3</experiments>
</comment>
<comment type="interaction">
    <interactant intactId="EBI-954089">
        <id>O15273</id>
    </interactant>
    <interactant intactId="EBI-348399">
        <id>P22607</id>
        <label>FGFR3</label>
    </interactant>
    <organismsDiffer>false</organismsDiffer>
    <experiments>3</experiments>
</comment>
<comment type="interaction">
    <interactant intactId="EBI-954089">
        <id>O15273</id>
    </interactant>
    <interactant intactId="EBI-744302">
        <id>P14136</id>
        <label>GFAP</label>
    </interactant>
    <organismsDiffer>false</organismsDiffer>
    <experiments>3</experiments>
</comment>
<comment type="interaction">
    <interactant intactId="EBI-954089">
        <id>O15273</id>
    </interactant>
    <interactant intactId="EBI-25913156">
        <id>O14908-2</id>
        <label>GIPC1</label>
    </interactant>
    <organismsDiffer>false</organismsDiffer>
    <experiments>3</experiments>
</comment>
<comment type="interaction">
    <interactant intactId="EBI-954089">
        <id>O15273</id>
    </interactant>
    <interactant intactId="EBI-8285963">
        <id>Q14957</id>
        <label>GRIN2C</label>
    </interactant>
    <organismsDiffer>false</organismsDiffer>
    <experiments>3</experiments>
</comment>
<comment type="interaction">
    <interactant intactId="EBI-954089">
        <id>O15273</id>
    </interactant>
    <interactant intactId="EBI-351506">
        <id>P06396</id>
        <label>GSN</label>
    </interactant>
    <organismsDiffer>false</organismsDiffer>
    <experiments>3</experiments>
</comment>
<comment type="interaction">
    <interactant intactId="EBI-954089">
        <id>O15273</id>
    </interactant>
    <interactant intactId="EBI-473886">
        <id>O00291</id>
        <label>HIP1</label>
    </interactant>
    <organismsDiffer>false</organismsDiffer>
    <experiments>3</experiments>
</comment>
<comment type="interaction">
    <interactant intactId="EBI-954089">
        <id>O15273</id>
    </interactant>
    <interactant intactId="EBI-351896">
        <id>P11142</id>
        <label>HSPA8</label>
    </interactant>
    <organismsDiffer>false</organismsDiffer>
    <experiments>4</experiments>
</comment>
<comment type="interaction">
    <interactant intactId="EBI-954089">
        <id>O15273</id>
    </interactant>
    <interactant intactId="EBI-747204">
        <id>Q9UKT9</id>
        <label>IKZF3</label>
    </interactant>
    <organismsDiffer>false</organismsDiffer>
    <experiments>3</experiments>
</comment>
<comment type="interaction">
    <interactant intactId="EBI-954089">
        <id>O15273</id>
    </interactant>
    <interactant intactId="EBI-1055254">
        <id>Q8WXH2</id>
        <label>JPH3</label>
    </interactant>
    <organismsDiffer>false</organismsDiffer>
    <experiments>3</experiments>
</comment>
<comment type="interaction">
    <interactant intactId="EBI-954089">
        <id>O15273</id>
    </interactant>
    <interactant intactId="EBI-948266">
        <id>O14901</id>
        <label>KLF11</label>
    </interactant>
    <organismsDiffer>false</organismsDiffer>
    <experiments>3</experiments>
</comment>
<comment type="interaction">
    <interactant intactId="EBI-954089">
        <id>O15273</id>
    </interactant>
    <interactant intactId="EBI-10241353">
        <id>Q3SYF9</id>
        <label>KRTAP19-7</label>
    </interactant>
    <organismsDiffer>false</organismsDiffer>
    <experiments>3</experiments>
</comment>
<comment type="interaction">
    <interactant intactId="EBI-954089">
        <id>O15273</id>
    </interactant>
    <interactant intactId="EBI-21591415">
        <id>P13473-2</id>
        <label>LAMP2</label>
    </interactant>
    <organismsDiffer>false</organismsDiffer>
    <experiments>3</experiments>
</comment>
<comment type="interaction">
    <interactant intactId="EBI-954089">
        <id>O15273</id>
    </interactant>
    <interactant intactId="EBI-713382">
        <id>O43504</id>
        <label>LAMTOR5</label>
    </interactant>
    <organismsDiffer>false</organismsDiffer>
    <experiments>5</experiments>
</comment>
<comment type="interaction">
    <interactant intactId="EBI-954089">
        <id>O15273</id>
    </interactant>
    <interactant intactId="EBI-746712">
        <id>Q9NPC6</id>
        <label>MYOZ2</label>
    </interactant>
    <organismsDiffer>false</organismsDiffer>
    <experiments>2</experiments>
</comment>
<comment type="interaction">
    <interactant intactId="EBI-954089">
        <id>O15273</id>
    </interactant>
    <interactant intactId="EBI-1307">
        <id>Q13153</id>
        <label>PAK1</label>
    </interactant>
    <organismsDiffer>false</organismsDiffer>
    <experiments>3</experiments>
</comment>
<comment type="interaction">
    <interactant intactId="EBI-954089">
        <id>O15273</id>
    </interactant>
    <interactant intactId="EBI-716404">
        <id>P16284</id>
        <label>PECAM1</label>
    </interactant>
    <organismsDiffer>false</organismsDiffer>
    <experiments>3</experiments>
</comment>
<comment type="interaction">
    <interactant intactId="EBI-954089">
        <id>O15273</id>
    </interactant>
    <interactant intactId="EBI-742388">
        <id>Q9H8W4</id>
        <label>PLEKHF2</label>
    </interactant>
    <organismsDiffer>false</organismsDiffer>
    <experiments>3</experiments>
</comment>
<comment type="interaction">
    <interactant intactId="EBI-954089">
        <id>O15273</id>
    </interactant>
    <interactant intactId="EBI-5280197">
        <id>O75400-2</id>
        <label>PRPF40A</label>
    </interactant>
    <organismsDiffer>false</organismsDiffer>
    <experiments>3</experiments>
</comment>
<comment type="interaction">
    <interactant intactId="EBI-954089">
        <id>O15273</id>
    </interactant>
    <interactant intactId="EBI-399437">
        <id>P20339</id>
        <label>RAB5A</label>
    </interactant>
    <organismsDiffer>false</organismsDiffer>
    <experiments>3</experiments>
</comment>
<comment type="interaction">
    <interactant intactId="EBI-954089">
        <id>O15273</id>
    </interactant>
    <interactant intactId="EBI-286642">
        <id>P62826</id>
        <label>RAN</label>
    </interactant>
    <organismsDiffer>false</organismsDiffer>
    <experiments>3</experiments>
</comment>
<comment type="interaction">
    <interactant intactId="EBI-954089">
        <id>O15273</id>
    </interactant>
    <interactant intactId="EBI-13072754">
        <id>Q5SSQ6-2</id>
        <label>SAPCD1</label>
    </interactant>
    <organismsDiffer>false</organismsDiffer>
    <experiments>3</experiments>
</comment>
<comment type="interaction">
    <interactant intactId="EBI-954089">
        <id>O15273</id>
    </interactant>
    <interactant intactId="EBI-355744">
        <id>Q12933</id>
        <label>TRAF2</label>
    </interactant>
    <organismsDiffer>false</organismsDiffer>
    <experiments>3</experiments>
</comment>
<comment type="interaction">
    <interactant intactId="EBI-954089">
        <id>O15273</id>
    </interactant>
    <interactant intactId="EBI-948354">
        <id>Q6DKK2</id>
        <label>TTC19</label>
    </interactant>
    <organismsDiffer>false</organismsDiffer>
    <experiments>4</experiments>
</comment>
<comment type="interaction">
    <interactant intactId="EBI-954089">
        <id>O15273</id>
    </interactant>
    <interactant intactId="EBI-681210">
        <id>Q8WZ42</id>
        <label>TTN</label>
    </interactant>
    <organismsDiffer>false</organismsDiffer>
    <experiments>9</experiments>
</comment>
<comment type="interaction">
    <interactant intactId="EBI-954089">
        <id>O15273</id>
    </interactant>
    <interactant intactId="EBI-15564183">
        <id>Q8WZ42-3</id>
        <label>TTN</label>
    </interactant>
    <organismsDiffer>false</organismsDiffer>
    <experiments>2</experiments>
</comment>
<comment type="interaction">
    <interactant intactId="EBI-954089">
        <id>O15273</id>
    </interactant>
    <interactant intactId="EBI-473850">
        <id>P61086</id>
        <label>UBE2K</label>
    </interactant>
    <organismsDiffer>false</organismsDiffer>
    <experiments>3</experiments>
</comment>
<comment type="interaction">
    <interactant intactId="EBI-954089">
        <id>O15273</id>
    </interactant>
    <interactant intactId="EBI-741480">
        <id>Q9UMX0</id>
        <label>UBQLN1</label>
    </interactant>
    <organismsDiffer>false</organismsDiffer>
    <experiments>3</experiments>
</comment>
<comment type="interaction">
    <interactant intactId="EBI-954089">
        <id>O15273</id>
    </interactant>
    <interactant intactId="EBI-353844">
        <id>P08670</id>
        <label>VIM</label>
    </interactant>
    <organismsDiffer>false</organismsDiffer>
    <experiments>3</experiments>
</comment>
<comment type="interaction">
    <interactant intactId="EBI-954089">
        <id>O15273</id>
    </interactant>
    <interactant intactId="EBI-25900580">
        <id>Q9Y649</id>
    </interactant>
    <organismsDiffer>false</organismsDiffer>
    <experiments>3</experiments>
</comment>
<comment type="subcellular location">
    <subcellularLocation>
        <location evidence="14">Cytoplasm</location>
        <location evidence="14">Myofibril</location>
        <location evidence="14">Sarcomere</location>
    </subcellularLocation>
</comment>
<comment type="tissue specificity">
    <text>Heart and skeletal muscle.</text>
</comment>
<comment type="disease" evidence="9 10">
    <disease id="DI-00220">
        <name>Cardiomyopathy, familial hypertrophic, 25</name>
        <acronym>CMH25</acronym>
        <description>A hereditary heart disorder characterized by ventricular hypertrophy, which is usually asymmetric and often involves the interventricular septum. The symptoms include dyspnea, syncope, collapse, palpitations, and chest pain. They can be readily provoked by exercise. The disorder has inter- and intrafamilial variability ranging from benign to malignant forms with high risk of cardiac failure and sudden cardiac death.</description>
        <dbReference type="MIM" id="607487"/>
    </disease>
    <text>The disease is caused by variants affecting the gene represented in this entry.</text>
</comment>
<comment type="disease" evidence="3">
    <disease id="DI-00664">
        <name>Muscular dystrophy, limb-girdle, autosomal recessive 7</name>
        <acronym>LGMDR7</acronym>
        <description>An autosomal recessive degenerative myopathy characterized by proximal and distal muscle weakness and atrophy in the limbs, dystrophic changes on muscle biopsy, and absence of telethonin. Cardiac muscle is involved in a subset of patients.</description>
        <dbReference type="MIM" id="601954"/>
    </disease>
    <text>The disease is caused by variants affecting the gene represented in this entry.</text>
</comment>
<comment type="miscellaneous">
    <text>The C-terminal domain appears to be unstructured in solution. It may promote the assembly of higher-order TTN complexes.</text>
</comment>
<organism>
    <name type="scientific">Homo sapiens</name>
    <name type="common">Human</name>
    <dbReference type="NCBI Taxonomy" id="9606"/>
    <lineage>
        <taxon>Eukaryota</taxon>
        <taxon>Metazoa</taxon>
        <taxon>Chordata</taxon>
        <taxon>Craniata</taxon>
        <taxon>Vertebrata</taxon>
        <taxon>Euteleostomi</taxon>
        <taxon>Mammalia</taxon>
        <taxon>Eutheria</taxon>
        <taxon>Euarchontoglires</taxon>
        <taxon>Primates</taxon>
        <taxon>Haplorrhini</taxon>
        <taxon>Catarrhini</taxon>
        <taxon>Hominidae</taxon>
        <taxon>Homo</taxon>
    </lineage>
</organism>
<keyword id="KW-0002">3D-structure</keyword>
<keyword id="KW-0122">Cardiomyopathy</keyword>
<keyword id="KW-0963">Cytoplasm</keyword>
<keyword id="KW-0225">Disease variant</keyword>
<keyword id="KW-0947">Limb-girdle muscular dystrophy</keyword>
<keyword id="KW-0597">Phosphoprotein</keyword>
<keyword id="KW-1267">Proteomics identification</keyword>
<keyword id="KW-1185">Reference proteome</keyword>
<gene>
    <name type="primary">TCAP</name>
</gene>
<accession>O15273</accession>
<accession>Q96L27</accession>
<name>TELT_HUMAN</name>
<proteinExistence type="evidence at protein level"/>
<protein>
    <recommendedName>
        <fullName>Telethonin</fullName>
    </recommendedName>
    <alternativeName>
        <fullName>Titin cap protein</fullName>
    </alternativeName>
</protein>